<gene>
    <name type="ORF">SPAC637.06</name>
</gene>
<proteinExistence type="evidence at transcript level"/>
<reference key="1">
    <citation type="journal article" date="1997" name="DNA Res.">
        <title>Identification of open reading frames in Schizosaccharomyces pombe cDNAs.</title>
        <authorList>
            <person name="Yoshioka S."/>
            <person name="Kato K."/>
            <person name="Nakai K."/>
            <person name="Okayama H."/>
            <person name="Nojima H."/>
        </authorList>
    </citation>
    <scope>NUCLEOTIDE SEQUENCE [LARGE SCALE MRNA]</scope>
    <source>
        <strain>PR745</strain>
    </source>
</reference>
<reference key="2">
    <citation type="journal article" date="2002" name="Nature">
        <title>The genome sequence of Schizosaccharomyces pombe.</title>
        <authorList>
            <person name="Wood V."/>
            <person name="Gwilliam R."/>
            <person name="Rajandream M.A."/>
            <person name="Lyne M.H."/>
            <person name="Lyne R."/>
            <person name="Stewart A."/>
            <person name="Sgouros J.G."/>
            <person name="Peat N."/>
            <person name="Hayles J."/>
            <person name="Baker S.G."/>
            <person name="Basham D."/>
            <person name="Bowman S."/>
            <person name="Brooks K."/>
            <person name="Brown D."/>
            <person name="Brown S."/>
            <person name="Chillingworth T."/>
            <person name="Churcher C.M."/>
            <person name="Collins M."/>
            <person name="Connor R."/>
            <person name="Cronin A."/>
            <person name="Davis P."/>
            <person name="Feltwell T."/>
            <person name="Fraser A."/>
            <person name="Gentles S."/>
            <person name="Goble A."/>
            <person name="Hamlin N."/>
            <person name="Harris D.E."/>
            <person name="Hidalgo J."/>
            <person name="Hodgson G."/>
            <person name="Holroyd S."/>
            <person name="Hornsby T."/>
            <person name="Howarth S."/>
            <person name="Huckle E.J."/>
            <person name="Hunt S."/>
            <person name="Jagels K."/>
            <person name="James K.D."/>
            <person name="Jones L."/>
            <person name="Jones M."/>
            <person name="Leather S."/>
            <person name="McDonald S."/>
            <person name="McLean J."/>
            <person name="Mooney P."/>
            <person name="Moule S."/>
            <person name="Mungall K.L."/>
            <person name="Murphy L.D."/>
            <person name="Niblett D."/>
            <person name="Odell C."/>
            <person name="Oliver K."/>
            <person name="O'Neil S."/>
            <person name="Pearson D."/>
            <person name="Quail M.A."/>
            <person name="Rabbinowitsch E."/>
            <person name="Rutherford K.M."/>
            <person name="Rutter S."/>
            <person name="Saunders D."/>
            <person name="Seeger K."/>
            <person name="Sharp S."/>
            <person name="Skelton J."/>
            <person name="Simmonds M.N."/>
            <person name="Squares R."/>
            <person name="Squares S."/>
            <person name="Stevens K."/>
            <person name="Taylor K."/>
            <person name="Taylor R.G."/>
            <person name="Tivey A."/>
            <person name="Walsh S.V."/>
            <person name="Warren T."/>
            <person name="Whitehead S."/>
            <person name="Woodward J.R."/>
            <person name="Volckaert G."/>
            <person name="Aert R."/>
            <person name="Robben J."/>
            <person name="Grymonprez B."/>
            <person name="Weltjens I."/>
            <person name="Vanstreels E."/>
            <person name="Rieger M."/>
            <person name="Schaefer M."/>
            <person name="Mueller-Auer S."/>
            <person name="Gabel C."/>
            <person name="Fuchs M."/>
            <person name="Duesterhoeft A."/>
            <person name="Fritzc C."/>
            <person name="Holzer E."/>
            <person name="Moestl D."/>
            <person name="Hilbert H."/>
            <person name="Borzym K."/>
            <person name="Langer I."/>
            <person name="Beck A."/>
            <person name="Lehrach H."/>
            <person name="Reinhardt R."/>
            <person name="Pohl T.M."/>
            <person name="Eger P."/>
            <person name="Zimmermann W."/>
            <person name="Wedler H."/>
            <person name="Wambutt R."/>
            <person name="Purnelle B."/>
            <person name="Goffeau A."/>
            <person name="Cadieu E."/>
            <person name="Dreano S."/>
            <person name="Gloux S."/>
            <person name="Lelaure V."/>
            <person name="Mottier S."/>
            <person name="Galibert F."/>
            <person name="Aves S.J."/>
            <person name="Xiang Z."/>
            <person name="Hunt C."/>
            <person name="Moore K."/>
            <person name="Hurst S.M."/>
            <person name="Lucas M."/>
            <person name="Rochet M."/>
            <person name="Gaillardin C."/>
            <person name="Tallada V.A."/>
            <person name="Garzon A."/>
            <person name="Thode G."/>
            <person name="Daga R.R."/>
            <person name="Cruzado L."/>
            <person name="Jimenez J."/>
            <person name="Sanchez M."/>
            <person name="del Rey F."/>
            <person name="Benito J."/>
            <person name="Dominguez A."/>
            <person name="Revuelta J.L."/>
            <person name="Moreno S."/>
            <person name="Armstrong J."/>
            <person name="Forsburg S.L."/>
            <person name="Cerutti L."/>
            <person name="Lowe T."/>
            <person name="McCombie W.R."/>
            <person name="Paulsen I."/>
            <person name="Potashkin J."/>
            <person name="Shpakovski G.V."/>
            <person name="Ussery D."/>
            <person name="Barrell B.G."/>
            <person name="Nurse P."/>
        </authorList>
    </citation>
    <scope>NUCLEOTIDE SEQUENCE [LARGE SCALE GENOMIC DNA]</scope>
    <source>
        <strain>972 / ATCC 24843</strain>
    </source>
</reference>
<name>YFE6_SCHPO</name>
<accession>P78817</accession>
<accession>Q1L849</accession>
<sequence length="347" mass="41127">MWNPKKKSEALAKFKSFPYPKPGTSNVLDSKEGDTRRKYFTKTHLHRLFVFVVLLLCSGYFLKHTLLTRPKESNVVMIFVNNIGGGVLDVKSPRQWELEKISTENKKKYAERHGYHFFVKSTGLKRRYAHEWRESWEKADYIMEAMKKYPHAEWFWWVDLTTFIMEPQYSLEKLIINRLDHIATRNITDSMEFNPKNFHEIPFVDYSEDINFILGQDCNGFSLGSFLVRRSDWTSRLMDFLWDPVVYGQKHMDWPHDEQNAIEYFYENNAWLRSGMGFVPLRLFNSYPPGACAGEGENPRFFYNQKEGDFLVNLAGCNYGRDCLDEINHYKGLAQRKRGWRKLVPFL</sequence>
<organism>
    <name type="scientific">Schizosaccharomyces pombe (strain 972 / ATCC 24843)</name>
    <name type="common">Fission yeast</name>
    <dbReference type="NCBI Taxonomy" id="284812"/>
    <lineage>
        <taxon>Eukaryota</taxon>
        <taxon>Fungi</taxon>
        <taxon>Dikarya</taxon>
        <taxon>Ascomycota</taxon>
        <taxon>Taphrinomycotina</taxon>
        <taxon>Schizosaccharomycetes</taxon>
        <taxon>Schizosaccharomycetales</taxon>
        <taxon>Schizosaccharomycetaceae</taxon>
        <taxon>Schizosaccharomyces</taxon>
    </lineage>
</organism>
<protein>
    <recommendedName>
        <fullName>Uncharacterized alpha-1,2-galactosyltransferase C637.06</fullName>
        <ecNumber>2.4.1.-</ecNumber>
    </recommendedName>
</protein>
<dbReference type="EC" id="2.4.1.-"/>
<dbReference type="EMBL" id="D89166">
    <property type="protein sequence ID" value="BAA13828.1"/>
    <property type="molecule type" value="mRNA"/>
</dbReference>
<dbReference type="EMBL" id="CU329670">
    <property type="protein sequence ID" value="CAA22585.1"/>
    <property type="molecule type" value="Genomic_DNA"/>
</dbReference>
<dbReference type="PIR" id="T38998">
    <property type="entry name" value="T38998"/>
</dbReference>
<dbReference type="PIR" id="T42528">
    <property type="entry name" value="T42528"/>
</dbReference>
<dbReference type="SMR" id="P78817"/>
<dbReference type="BioGRID" id="279806">
    <property type="interactions" value="180"/>
</dbReference>
<dbReference type="FunCoup" id="P78817">
    <property type="interactions" value="79"/>
</dbReference>
<dbReference type="STRING" id="284812.P78817"/>
<dbReference type="CAZy" id="GT34">
    <property type="family name" value="Glycosyltransferase Family 34"/>
</dbReference>
<dbReference type="iPTMnet" id="P78817"/>
<dbReference type="PaxDb" id="4896-SPAC637.06.1"/>
<dbReference type="EnsemblFungi" id="SPAC637.06.1">
    <property type="protein sequence ID" value="SPAC637.06.1:pep"/>
    <property type="gene ID" value="SPAC637.06"/>
</dbReference>
<dbReference type="KEGG" id="spo:2543384"/>
<dbReference type="PomBase" id="SPAC637.06"/>
<dbReference type="VEuPathDB" id="FungiDB:SPAC637.06"/>
<dbReference type="eggNOG" id="KOG4748">
    <property type="taxonomic scope" value="Eukaryota"/>
</dbReference>
<dbReference type="HOGENOM" id="CLU_021434_0_0_1"/>
<dbReference type="InParanoid" id="P78817"/>
<dbReference type="OMA" id="GWQKVDI"/>
<dbReference type="PhylomeDB" id="P78817"/>
<dbReference type="PRO" id="PR:P78817"/>
<dbReference type="Proteomes" id="UP000002485">
    <property type="component" value="Chromosome I"/>
</dbReference>
<dbReference type="GO" id="GO:0005789">
    <property type="term" value="C:endoplasmic reticulum membrane"/>
    <property type="evidence" value="ECO:0007669"/>
    <property type="project" value="UniProtKB-SubCell"/>
</dbReference>
<dbReference type="GO" id="GO:0005794">
    <property type="term" value="C:Golgi apparatus"/>
    <property type="evidence" value="ECO:0000314"/>
    <property type="project" value="PomBase"/>
</dbReference>
<dbReference type="GO" id="GO:0000139">
    <property type="term" value="C:Golgi membrane"/>
    <property type="evidence" value="ECO:0000318"/>
    <property type="project" value="GO_Central"/>
</dbReference>
<dbReference type="GO" id="GO:0031278">
    <property type="term" value="F:alpha-1,2-galactosyltransferase activity"/>
    <property type="evidence" value="ECO:0000250"/>
    <property type="project" value="PomBase"/>
</dbReference>
<dbReference type="GO" id="GO:0006487">
    <property type="term" value="P:protein N-linked glycosylation"/>
    <property type="evidence" value="ECO:0000318"/>
    <property type="project" value="GO_Central"/>
</dbReference>
<dbReference type="Gene3D" id="3.90.550.10">
    <property type="entry name" value="Spore Coat Polysaccharide Biosynthesis Protein SpsA, Chain A"/>
    <property type="match status" value="1"/>
</dbReference>
<dbReference type="InterPro" id="IPR008630">
    <property type="entry name" value="Glyco_trans_34"/>
</dbReference>
<dbReference type="InterPro" id="IPR029044">
    <property type="entry name" value="Nucleotide-diphossugar_trans"/>
</dbReference>
<dbReference type="PANTHER" id="PTHR31306:SF5">
    <property type="entry name" value="ALPHA-1,6-MANNOSYLTRANSFERASE MNN10-RELATED"/>
    <property type="match status" value="1"/>
</dbReference>
<dbReference type="PANTHER" id="PTHR31306">
    <property type="entry name" value="ALPHA-1,6-MANNOSYLTRANSFERASE MNN11-RELATED"/>
    <property type="match status" value="1"/>
</dbReference>
<dbReference type="Pfam" id="PF05637">
    <property type="entry name" value="Glyco_transf_34"/>
    <property type="match status" value="1"/>
</dbReference>
<comment type="subcellular location">
    <subcellularLocation>
        <location evidence="1">Endoplasmic reticulum membrane</location>
        <topology evidence="1">Single-pass type II membrane protein</topology>
    </subcellularLocation>
</comment>
<comment type="similarity">
    <text evidence="3">Belongs to the glycosyltransferase 34 family.</text>
</comment>
<feature type="chain" id="PRO_0000339341" description="Uncharacterized alpha-1,2-galactosyltransferase C637.06">
    <location>
        <begin position="1"/>
        <end position="347"/>
    </location>
</feature>
<feature type="topological domain" description="Cytoplasmic" evidence="2">
    <location>
        <begin position="1"/>
        <end position="44"/>
    </location>
</feature>
<feature type="transmembrane region" description="Helical; Signal-anchor for type II membrane protein" evidence="2">
    <location>
        <begin position="45"/>
        <end position="62"/>
    </location>
</feature>
<feature type="topological domain" description="Lumenal" evidence="2">
    <location>
        <begin position="63"/>
        <end position="347"/>
    </location>
</feature>
<feature type="sequence conflict" description="In Ref. 1; BAA13828." evidence="3" ref="1">
    <original>K</original>
    <variation>T</variation>
    <location>
        <position position="5"/>
    </location>
</feature>
<feature type="sequence conflict" description="In Ref. 1; BAA13828." evidence="3" ref="1">
    <original>F</original>
    <variation>L</variation>
    <location>
        <position position="346"/>
    </location>
</feature>
<keyword id="KW-0256">Endoplasmic reticulum</keyword>
<keyword id="KW-0328">Glycosyltransferase</keyword>
<keyword id="KW-0472">Membrane</keyword>
<keyword id="KW-1185">Reference proteome</keyword>
<keyword id="KW-0735">Signal-anchor</keyword>
<keyword id="KW-0808">Transferase</keyword>
<keyword id="KW-0812">Transmembrane</keyword>
<keyword id="KW-1133">Transmembrane helix</keyword>
<evidence type="ECO:0000250" key="1"/>
<evidence type="ECO:0000255" key="2"/>
<evidence type="ECO:0000305" key="3"/>